<protein>
    <recommendedName>
        <fullName>1,4-alpha-glucan-branching enzyme</fullName>
        <ecNumber evidence="3">2.4.1.18</ecNumber>
    </recommendedName>
    <alternativeName>
        <fullName>Glycogen-branching enzyme</fullName>
    </alternativeName>
</protein>
<sequence>MSLTKIPENVQGAVSIDPWLEPFADVLSERRYLADKWLYDIKHATPDGSEQSLVDFARNAYKTYGLHANQQTKEIVYREWAPNAQRAFLVGEFNNWNEESHEMKHKDEFGVFSITLAPLENGDFAIPHDSKIKVMFVLPDGSKVYRIPAWITRATQPSKETAQKYGPTYEGRFWNPPNSYQFKHQRPKFNLANDSIKIYEAHIGISSPEPKVASYKEFTQNVLPRIKHLGYDAIQLMAIMEHAYYASFGYQVTNFFAISSRYGTPEDLKELIDTAHSMGILVLLDVIHSHASKNSEDGLNMFDGSDHQYFHSLTSGRGEHPLWDSRLFNYGSFEVQRFLLANLAYYIDVYQFDGFRFDGVTSMLYLHHGVGAGGAFSGDYNEYLSRDRSGVDHEALAYLMLANDLVHDLLPESAVTIAEDVSGYPTLCLPRTAGGGGFDYRLAMALPDMWIKLLKTKQDDDWDMGHIVHTLTNRRHGEKVVAYCESHDQALVGDKTLAFWLMDAAMYTDMTVLKEPTLVIDRGIALHKMIRLITHSLGGEAYLNFEGNEFGHPEWLDFPRVGNNDSYHYARRQFNLVDDDLLRYRHLNEFDAAMQNCESKHQWLNTPQAYVSLKHEVDKVIAFERNGHLFVFNFHPTQSFTDYRIGVDVAGTYKIVLNTDRAEFGGHNRIDEAQEFFTTDLEWNNRRNFIQVYIPSRTAIVLTRQM</sequence>
<name>GLGB_CANGA</name>
<reference key="1">
    <citation type="journal article" date="2004" name="Nature">
        <title>Genome evolution in yeasts.</title>
        <authorList>
            <person name="Dujon B."/>
            <person name="Sherman D."/>
            <person name="Fischer G."/>
            <person name="Durrens P."/>
            <person name="Casaregola S."/>
            <person name="Lafontaine I."/>
            <person name="de Montigny J."/>
            <person name="Marck C."/>
            <person name="Neuveglise C."/>
            <person name="Talla E."/>
            <person name="Goffard N."/>
            <person name="Frangeul L."/>
            <person name="Aigle M."/>
            <person name="Anthouard V."/>
            <person name="Babour A."/>
            <person name="Barbe V."/>
            <person name="Barnay S."/>
            <person name="Blanchin S."/>
            <person name="Beckerich J.-M."/>
            <person name="Beyne E."/>
            <person name="Bleykasten C."/>
            <person name="Boisrame A."/>
            <person name="Boyer J."/>
            <person name="Cattolico L."/>
            <person name="Confanioleri F."/>
            <person name="de Daruvar A."/>
            <person name="Despons L."/>
            <person name="Fabre E."/>
            <person name="Fairhead C."/>
            <person name="Ferry-Dumazet H."/>
            <person name="Groppi A."/>
            <person name="Hantraye F."/>
            <person name="Hennequin C."/>
            <person name="Jauniaux N."/>
            <person name="Joyet P."/>
            <person name="Kachouri R."/>
            <person name="Kerrest A."/>
            <person name="Koszul R."/>
            <person name="Lemaire M."/>
            <person name="Lesur I."/>
            <person name="Ma L."/>
            <person name="Muller H."/>
            <person name="Nicaud J.-M."/>
            <person name="Nikolski M."/>
            <person name="Oztas S."/>
            <person name="Ozier-Kalogeropoulos O."/>
            <person name="Pellenz S."/>
            <person name="Potier S."/>
            <person name="Richard G.-F."/>
            <person name="Straub M.-L."/>
            <person name="Suleau A."/>
            <person name="Swennen D."/>
            <person name="Tekaia F."/>
            <person name="Wesolowski-Louvel M."/>
            <person name="Westhof E."/>
            <person name="Wirth B."/>
            <person name="Zeniou-Meyer M."/>
            <person name="Zivanovic Y."/>
            <person name="Bolotin-Fukuhara M."/>
            <person name="Thierry A."/>
            <person name="Bouchier C."/>
            <person name="Caudron B."/>
            <person name="Scarpelli C."/>
            <person name="Gaillardin C."/>
            <person name="Weissenbach J."/>
            <person name="Wincker P."/>
            <person name="Souciet J.-L."/>
        </authorList>
    </citation>
    <scope>NUCLEOTIDE SEQUENCE [LARGE SCALE GENOMIC DNA]</scope>
    <source>
        <strain>ATCC 2001 / BCRC 20586 / JCM 3761 / NBRC 0622 / NRRL Y-65 / CBS 138</strain>
    </source>
</reference>
<reference evidence="6 7 8" key="2">
    <citation type="journal article" date="2022" name="Glycobiology">
        <title>The Candida glabrata glycogen branching enzyme structure reveals unique features of branching enzymes of the Saccharomycetaceae phylum.</title>
        <authorList>
            <person name="Conchou L."/>
            <person name="Martin J."/>
            <person name="Goncalves I.R."/>
            <person name="Galisson F."/>
            <person name="Violot S."/>
            <person name="Guilliere F."/>
            <person name="Aghajari N."/>
            <person name="Ballut L."/>
        </authorList>
    </citation>
    <scope>X-RAY CRYSTALLOGRAPHY (1.93 ANGSTROMS) IN COMPLEX WITH MALTOTRIOSE</scope>
    <scope>FUNCTION</scope>
    <scope>CATALYTIC ACTIVITY</scope>
    <scope>BIOPHYSICOCHEMICAL PROPERTIES</scope>
    <scope>SUBUNIT</scope>
</reference>
<dbReference type="EC" id="2.4.1.18" evidence="3"/>
<dbReference type="EMBL" id="CR380959">
    <property type="protein sequence ID" value="CAG62470.1"/>
    <property type="molecule type" value="Genomic_DNA"/>
</dbReference>
<dbReference type="RefSeq" id="XP_449494.1">
    <property type="nucleotide sequence ID" value="XM_449494.1"/>
</dbReference>
<dbReference type="PDB" id="7P43">
    <property type="method" value="X-ray"/>
    <property type="resolution" value="1.93 A"/>
    <property type="chains" value="A/B=1-706"/>
</dbReference>
<dbReference type="PDB" id="7P44">
    <property type="method" value="X-ray"/>
    <property type="resolution" value="2.40 A"/>
    <property type="chains" value="A/B=1-706"/>
</dbReference>
<dbReference type="PDB" id="7P45">
    <property type="method" value="X-ray"/>
    <property type="resolution" value="2.09 A"/>
    <property type="chains" value="A=1-706"/>
</dbReference>
<dbReference type="PDBsum" id="7P43"/>
<dbReference type="PDBsum" id="7P44"/>
<dbReference type="PDBsum" id="7P45"/>
<dbReference type="SMR" id="Q6FJV0"/>
<dbReference type="FunCoup" id="Q6FJV0">
    <property type="interactions" value="478"/>
</dbReference>
<dbReference type="STRING" id="284593.Q6FJV0"/>
<dbReference type="CAZy" id="CBM48">
    <property type="family name" value="Carbohydrate-Binding Module Family 48"/>
</dbReference>
<dbReference type="CAZy" id="GH13">
    <property type="family name" value="Glycoside Hydrolase Family 13"/>
</dbReference>
<dbReference type="EnsemblFungi" id="CAGL0M03377g-T">
    <property type="protein sequence ID" value="CAGL0M03377g-T-p1"/>
    <property type="gene ID" value="CAGL0M03377g"/>
</dbReference>
<dbReference type="KEGG" id="cgr:2891502"/>
<dbReference type="CGD" id="CAL0136349">
    <property type="gene designation" value="CAGL0M03377g"/>
</dbReference>
<dbReference type="VEuPathDB" id="FungiDB:B1J91_M03377g"/>
<dbReference type="VEuPathDB" id="FungiDB:CAGL0M03377g"/>
<dbReference type="eggNOG" id="KOG0470">
    <property type="taxonomic scope" value="Eukaryota"/>
</dbReference>
<dbReference type="HOGENOM" id="CLU_011131_2_2_1"/>
<dbReference type="InParanoid" id="Q6FJV0"/>
<dbReference type="OMA" id="YEMHLGS"/>
<dbReference type="UniPathway" id="UPA00164"/>
<dbReference type="Proteomes" id="UP000002428">
    <property type="component" value="Chromosome M"/>
</dbReference>
<dbReference type="GO" id="GO:0005737">
    <property type="term" value="C:cytoplasm"/>
    <property type="evidence" value="ECO:0000250"/>
    <property type="project" value="UniProtKB"/>
</dbReference>
<dbReference type="GO" id="GO:0062040">
    <property type="term" value="C:fungal biofilm matrix"/>
    <property type="evidence" value="ECO:0000314"/>
    <property type="project" value="CGD"/>
</dbReference>
<dbReference type="GO" id="GO:0003844">
    <property type="term" value="F:1,4-alpha-glucan branching enzyme activity"/>
    <property type="evidence" value="ECO:0007669"/>
    <property type="project" value="UniProtKB-EC"/>
</dbReference>
<dbReference type="GO" id="GO:0043169">
    <property type="term" value="F:cation binding"/>
    <property type="evidence" value="ECO:0007669"/>
    <property type="project" value="InterPro"/>
</dbReference>
<dbReference type="GO" id="GO:0008466">
    <property type="term" value="F:glycogenin glucosyltransferase activity"/>
    <property type="evidence" value="ECO:0000314"/>
    <property type="project" value="UniProtKB"/>
</dbReference>
<dbReference type="GO" id="GO:0004553">
    <property type="term" value="F:hydrolase activity, hydrolyzing O-glycosyl compounds"/>
    <property type="evidence" value="ECO:0007669"/>
    <property type="project" value="InterPro"/>
</dbReference>
<dbReference type="GO" id="GO:0005978">
    <property type="term" value="P:glycogen biosynthetic process"/>
    <property type="evidence" value="ECO:0000314"/>
    <property type="project" value="UniProtKB"/>
</dbReference>
<dbReference type="CDD" id="cd11321">
    <property type="entry name" value="AmyAc_bac_euk_BE"/>
    <property type="match status" value="1"/>
</dbReference>
<dbReference type="CDD" id="cd02854">
    <property type="entry name" value="E_set_GBE_euk_N"/>
    <property type="match status" value="1"/>
</dbReference>
<dbReference type="FunFam" id="3.20.20.80:FF:000001">
    <property type="entry name" value="1,4-alpha-glucan branching enzyme"/>
    <property type="match status" value="1"/>
</dbReference>
<dbReference type="FunFam" id="2.60.40.10:FF:001874">
    <property type="entry name" value="1,4-alpha-glucan-branching enzyme"/>
    <property type="match status" value="1"/>
</dbReference>
<dbReference type="FunFam" id="2.60.40.1180:FF:000003">
    <property type="entry name" value="1,4-alpha-glucan-branching enzyme, chloroplastic/amyloplastic"/>
    <property type="match status" value="1"/>
</dbReference>
<dbReference type="Gene3D" id="3.20.20.80">
    <property type="entry name" value="Glycosidases"/>
    <property type="match status" value="1"/>
</dbReference>
<dbReference type="Gene3D" id="2.60.40.1180">
    <property type="entry name" value="Golgi alpha-mannosidase II"/>
    <property type="match status" value="1"/>
</dbReference>
<dbReference type="Gene3D" id="2.60.40.10">
    <property type="entry name" value="Immunoglobulins"/>
    <property type="match status" value="1"/>
</dbReference>
<dbReference type="InterPro" id="IPR006048">
    <property type="entry name" value="A-amylase/branching_C"/>
</dbReference>
<dbReference type="InterPro" id="IPR037439">
    <property type="entry name" value="Branching_enzy"/>
</dbReference>
<dbReference type="InterPro" id="IPR006047">
    <property type="entry name" value="Glyco_hydro_13_cat_dom"/>
</dbReference>
<dbReference type="InterPro" id="IPR004193">
    <property type="entry name" value="Glyco_hydro_13_N"/>
</dbReference>
<dbReference type="InterPro" id="IPR013780">
    <property type="entry name" value="Glyco_hydro_b"/>
</dbReference>
<dbReference type="InterPro" id="IPR017853">
    <property type="entry name" value="Glycoside_hydrolase_SF"/>
</dbReference>
<dbReference type="InterPro" id="IPR013783">
    <property type="entry name" value="Ig-like_fold"/>
</dbReference>
<dbReference type="InterPro" id="IPR014756">
    <property type="entry name" value="Ig_E-set"/>
</dbReference>
<dbReference type="PANTHER" id="PTHR43651">
    <property type="entry name" value="1,4-ALPHA-GLUCAN-BRANCHING ENZYME"/>
    <property type="match status" value="1"/>
</dbReference>
<dbReference type="PANTHER" id="PTHR43651:SF3">
    <property type="entry name" value="1,4-ALPHA-GLUCAN-BRANCHING ENZYME"/>
    <property type="match status" value="1"/>
</dbReference>
<dbReference type="Pfam" id="PF00128">
    <property type="entry name" value="Alpha-amylase"/>
    <property type="match status" value="1"/>
</dbReference>
<dbReference type="Pfam" id="PF02806">
    <property type="entry name" value="Alpha-amylase_C"/>
    <property type="match status" value="1"/>
</dbReference>
<dbReference type="Pfam" id="PF02922">
    <property type="entry name" value="CBM_48"/>
    <property type="match status" value="1"/>
</dbReference>
<dbReference type="PIRSF" id="PIRSF000463">
    <property type="entry name" value="GlgB"/>
    <property type="match status" value="1"/>
</dbReference>
<dbReference type="SMART" id="SM00642">
    <property type="entry name" value="Aamy"/>
    <property type="match status" value="1"/>
</dbReference>
<dbReference type="SUPFAM" id="SSF51445">
    <property type="entry name" value="(Trans)glycosidases"/>
    <property type="match status" value="1"/>
</dbReference>
<dbReference type="SUPFAM" id="SSF81296">
    <property type="entry name" value="E set domains"/>
    <property type="match status" value="1"/>
</dbReference>
<dbReference type="SUPFAM" id="SSF51011">
    <property type="entry name" value="Glycosyl hydrolase domain"/>
    <property type="match status" value="1"/>
</dbReference>
<keyword id="KW-0002">3D-structure</keyword>
<keyword id="KW-0963">Cytoplasm</keyword>
<keyword id="KW-0320">Glycogen biosynthesis</keyword>
<keyword id="KW-0328">Glycosyltransferase</keyword>
<keyword id="KW-1185">Reference proteome</keyword>
<keyword id="KW-0808">Transferase</keyword>
<organism>
    <name type="scientific">Candida glabrata (strain ATCC 2001 / BCRC 20586 / JCM 3761 / NBRC 0622 / NRRL Y-65 / CBS 138)</name>
    <name type="common">Yeast</name>
    <name type="synonym">Nakaseomyces glabratus</name>
    <dbReference type="NCBI Taxonomy" id="284593"/>
    <lineage>
        <taxon>Eukaryota</taxon>
        <taxon>Fungi</taxon>
        <taxon>Dikarya</taxon>
        <taxon>Ascomycota</taxon>
        <taxon>Saccharomycotina</taxon>
        <taxon>Saccharomycetes</taxon>
        <taxon>Saccharomycetales</taxon>
        <taxon>Saccharomycetaceae</taxon>
        <taxon>Nakaseomyces</taxon>
    </lineage>
</organism>
<feature type="chain" id="PRO_0000188779" description="1,4-alpha-glucan-branching enzyme">
    <location>
        <begin position="1"/>
        <end position="706"/>
    </location>
</feature>
<feature type="active site" description="Nucleophile" evidence="2">
    <location>
        <position position="358"/>
    </location>
</feature>
<feature type="active site" description="Proton donor" evidence="2">
    <location>
        <position position="419"/>
    </location>
</feature>
<feature type="binding site" evidence="5">
    <location>
        <position position="96"/>
    </location>
    <ligand>
        <name>(1,4-alpha-D-glucosyl)n</name>
        <dbReference type="ChEBI" id="CHEBI:15444"/>
    </ligand>
</feature>
<feature type="binding site" evidence="5">
    <location>
        <position position="133"/>
    </location>
    <ligand>
        <name>(1,4-alpha-D-glucosyl)n</name>
        <dbReference type="ChEBI" id="CHEBI:15444"/>
    </ligand>
</feature>
<feature type="site" description="Transition state stabilizer" evidence="2">
    <location>
        <position position="488"/>
    </location>
</feature>
<feature type="helix" evidence="9">
    <location>
        <begin position="8"/>
        <end position="10"/>
    </location>
</feature>
<feature type="helix" evidence="9">
    <location>
        <begin position="11"/>
        <end position="16"/>
    </location>
</feature>
<feature type="helix" evidence="9">
    <location>
        <begin position="18"/>
        <end position="23"/>
    </location>
</feature>
<feature type="helix" evidence="9">
    <location>
        <begin position="24"/>
        <end position="42"/>
    </location>
</feature>
<feature type="helix" evidence="9">
    <location>
        <begin position="53"/>
        <end position="63"/>
    </location>
</feature>
<feature type="strand" evidence="9">
    <location>
        <begin position="64"/>
        <end position="68"/>
    </location>
</feature>
<feature type="turn" evidence="9">
    <location>
        <begin position="70"/>
        <end position="72"/>
    </location>
</feature>
<feature type="strand" evidence="9">
    <location>
        <begin position="75"/>
        <end position="80"/>
    </location>
</feature>
<feature type="strand" evidence="9">
    <location>
        <begin position="85"/>
        <end position="91"/>
    </location>
</feature>
<feature type="helix" evidence="9">
    <location>
        <begin position="92"/>
        <end position="94"/>
    </location>
</feature>
<feature type="strand" evidence="11">
    <location>
        <begin position="98"/>
        <end position="100"/>
    </location>
</feature>
<feature type="strand" evidence="9">
    <location>
        <begin position="110"/>
        <end position="116"/>
    </location>
</feature>
<feature type="strand" evidence="9">
    <location>
        <begin position="131"/>
        <end position="137"/>
    </location>
</feature>
<feature type="strand" evidence="9">
    <location>
        <begin position="143"/>
        <end position="146"/>
    </location>
</feature>
<feature type="helix" evidence="9">
    <location>
        <begin position="159"/>
        <end position="165"/>
    </location>
</feature>
<feature type="strand" evidence="9">
    <location>
        <begin position="170"/>
        <end position="172"/>
    </location>
</feature>
<feature type="turn" evidence="9">
    <location>
        <begin position="191"/>
        <end position="193"/>
    </location>
</feature>
<feature type="strand" evidence="9">
    <location>
        <begin position="197"/>
        <end position="203"/>
    </location>
</feature>
<feature type="strand" evidence="9">
    <location>
        <begin position="207"/>
        <end position="211"/>
    </location>
</feature>
<feature type="helix" evidence="9">
    <location>
        <begin position="215"/>
        <end position="221"/>
    </location>
</feature>
<feature type="helix" evidence="9">
    <location>
        <begin position="223"/>
        <end position="229"/>
    </location>
</feature>
<feature type="strand" evidence="9">
    <location>
        <begin position="232"/>
        <end position="238"/>
    </location>
</feature>
<feature type="helix" evidence="9">
    <location>
        <begin position="245"/>
        <end position="247"/>
    </location>
</feature>
<feature type="strand" evidence="9">
    <location>
        <begin position="253"/>
        <end position="258"/>
    </location>
</feature>
<feature type="helix" evidence="9">
    <location>
        <begin position="260"/>
        <end position="262"/>
    </location>
</feature>
<feature type="helix" evidence="9">
    <location>
        <begin position="265"/>
        <end position="277"/>
    </location>
</feature>
<feature type="strand" evidence="9">
    <location>
        <begin position="281"/>
        <end position="286"/>
    </location>
</feature>
<feature type="strand" evidence="9">
    <location>
        <begin position="295"/>
        <end position="299"/>
    </location>
</feature>
<feature type="turn" evidence="9">
    <location>
        <begin position="300"/>
        <end position="303"/>
    </location>
</feature>
<feature type="strand" evidence="9">
    <location>
        <begin position="304"/>
        <end position="310"/>
    </location>
</feature>
<feature type="helix" evidence="11">
    <location>
        <begin position="313"/>
        <end position="315"/>
    </location>
</feature>
<feature type="turn" evidence="9">
    <location>
        <begin position="321"/>
        <end position="323"/>
    </location>
</feature>
<feature type="helix" evidence="9">
    <location>
        <begin position="333"/>
        <end position="349"/>
    </location>
</feature>
<feature type="strand" evidence="9">
    <location>
        <begin position="354"/>
        <end position="357"/>
    </location>
</feature>
<feature type="helix" evidence="9">
    <location>
        <begin position="360"/>
        <end position="364"/>
    </location>
</feature>
<feature type="turn" evidence="9">
    <location>
        <begin position="366"/>
        <end position="369"/>
    </location>
</feature>
<feature type="strand" evidence="10">
    <location>
        <begin position="371"/>
        <end position="374"/>
    </location>
</feature>
<feature type="helix" evidence="9">
    <location>
        <begin position="380"/>
        <end position="384"/>
    </location>
</feature>
<feature type="turn" evidence="9">
    <location>
        <begin position="386"/>
        <end position="388"/>
    </location>
</feature>
<feature type="helix" evidence="9">
    <location>
        <begin position="393"/>
        <end position="409"/>
    </location>
</feature>
<feature type="turn" evidence="9">
    <location>
        <begin position="411"/>
        <end position="413"/>
    </location>
</feature>
<feature type="strand" evidence="9">
    <location>
        <begin position="415"/>
        <end position="418"/>
    </location>
</feature>
<feature type="turn" evidence="9">
    <location>
        <begin position="425"/>
        <end position="428"/>
    </location>
</feature>
<feature type="helix" evidence="9">
    <location>
        <begin position="431"/>
        <end position="433"/>
    </location>
</feature>
<feature type="strand" evidence="9">
    <location>
        <begin position="439"/>
        <end position="442"/>
    </location>
</feature>
<feature type="helix" evidence="9">
    <location>
        <begin position="446"/>
        <end position="456"/>
    </location>
</feature>
<feature type="helix" evidence="9">
    <location>
        <begin position="459"/>
        <end position="461"/>
    </location>
</feature>
<feature type="helix" evidence="9">
    <location>
        <begin position="464"/>
        <end position="472"/>
    </location>
</feature>
<feature type="strand" evidence="9">
    <location>
        <begin position="480"/>
        <end position="482"/>
    </location>
</feature>
<feature type="helix" evidence="9">
    <location>
        <begin position="487"/>
        <end position="490"/>
    </location>
</feature>
<feature type="helix" evidence="9">
    <location>
        <begin position="497"/>
        <end position="502"/>
    </location>
</feature>
<feature type="turn" evidence="9">
    <location>
        <begin position="507"/>
        <end position="509"/>
    </location>
</feature>
<feature type="strand" evidence="11">
    <location>
        <begin position="511"/>
        <end position="514"/>
    </location>
</feature>
<feature type="helix" evidence="9">
    <location>
        <begin position="518"/>
        <end position="537"/>
    </location>
</feature>
<feature type="strand" evidence="9">
    <location>
        <begin position="540"/>
        <end position="545"/>
    </location>
</feature>
<feature type="helix" evidence="9">
    <location>
        <begin position="548"/>
        <end position="550"/>
    </location>
</feature>
<feature type="helix" evidence="9">
    <location>
        <begin position="561"/>
        <end position="563"/>
    </location>
</feature>
<feature type="helix" evidence="9">
    <location>
        <begin position="575"/>
        <end position="578"/>
    </location>
</feature>
<feature type="helix" evidence="9">
    <location>
        <begin position="584"/>
        <end position="600"/>
    </location>
</feature>
<feature type="strand" evidence="9">
    <location>
        <begin position="604"/>
        <end position="606"/>
    </location>
</feature>
<feature type="strand" evidence="9">
    <location>
        <begin position="610"/>
        <end position="615"/>
    </location>
</feature>
<feature type="turn" evidence="9">
    <location>
        <begin position="616"/>
        <end position="619"/>
    </location>
</feature>
<feature type="strand" evidence="9">
    <location>
        <begin position="620"/>
        <end position="625"/>
    </location>
</feature>
<feature type="strand" evidence="9">
    <location>
        <begin position="628"/>
        <end position="633"/>
    </location>
</feature>
<feature type="strand" evidence="9">
    <location>
        <begin position="640"/>
        <end position="649"/>
    </location>
</feature>
<feature type="strand" evidence="9">
    <location>
        <begin position="651"/>
        <end position="658"/>
    </location>
</feature>
<feature type="helix" evidence="9">
    <location>
        <begin position="662"/>
        <end position="664"/>
    </location>
</feature>
<feature type="strand" evidence="9">
    <location>
        <begin position="679"/>
        <end position="681"/>
    </location>
</feature>
<feature type="strand" evidence="9">
    <location>
        <begin position="686"/>
        <end position="694"/>
    </location>
</feature>
<feature type="strand" evidence="9">
    <location>
        <begin position="698"/>
        <end position="704"/>
    </location>
</feature>
<accession>Q6FJV0</accession>
<comment type="function">
    <text evidence="3">Glycogen-branching enzyme participates in the glycogen biosynthetic process along with glycogenin and glycogen synthase. Generates alpha-1,6-glucosidic branches from alpha-1,4-linked glucose chains, to increase solubility of the glycogen polymer.</text>
</comment>
<comment type="catalytic activity">
    <reaction evidence="3">
        <text>Transfers a segment of a (1-&gt;4)-alpha-D-glucan chain to a primary hydroxy group in a similar glucan chain.</text>
        <dbReference type="EC" id="2.4.1.18"/>
    </reaction>
</comment>
<comment type="biophysicochemical properties">
    <phDependence>
        <text evidence="3">Optimum pH is 7.</text>
    </phDependence>
    <temperatureDependence>
        <text evidence="3">Optimum temperature is 25 degrees Celsius.</text>
    </temperatureDependence>
</comment>
<comment type="pathway">
    <text evidence="2">Glycan biosynthesis; glycogen biosynthesis.</text>
</comment>
<comment type="subunit">
    <text evidence="3">Monomer.</text>
</comment>
<comment type="subcellular location">
    <subcellularLocation>
        <location evidence="1">Cytoplasm</location>
    </subcellularLocation>
    <text evidence="1">Localizes to glycogen granules in the cytoplasm.</text>
</comment>
<comment type="similarity">
    <text evidence="4">Belongs to the glycosyl hydrolase 13 family. GlgB subfamily.</text>
</comment>
<proteinExistence type="evidence at protein level"/>
<evidence type="ECO:0000250" key="1">
    <source>
        <dbReference type="UniProtKB" id="P32775"/>
    </source>
</evidence>
<evidence type="ECO:0000250" key="2">
    <source>
        <dbReference type="UniProtKB" id="Q04446"/>
    </source>
</evidence>
<evidence type="ECO:0000269" key="3">
    <source>
    </source>
</evidence>
<evidence type="ECO:0000305" key="4"/>
<evidence type="ECO:0000305" key="5">
    <source>
    </source>
</evidence>
<evidence type="ECO:0007744" key="6">
    <source>
        <dbReference type="PDB" id="7P43"/>
    </source>
</evidence>
<evidence type="ECO:0007744" key="7">
    <source>
        <dbReference type="PDB" id="7P44"/>
    </source>
</evidence>
<evidence type="ECO:0007744" key="8">
    <source>
        <dbReference type="PDB" id="7P45"/>
    </source>
</evidence>
<evidence type="ECO:0007829" key="9">
    <source>
        <dbReference type="PDB" id="7P43"/>
    </source>
</evidence>
<evidence type="ECO:0007829" key="10">
    <source>
        <dbReference type="PDB" id="7P44"/>
    </source>
</evidence>
<evidence type="ECO:0007829" key="11">
    <source>
        <dbReference type="PDB" id="7P45"/>
    </source>
</evidence>
<gene>
    <name type="primary">GLC3</name>
    <name type="ordered locus">CAGL0M03377g</name>
</gene>